<organism>
    <name type="scientific">Thermoanaerobacter pseudethanolicus (strain ATCC 33223 / 39E)</name>
    <name type="common">Clostridium thermohydrosulfuricum</name>
    <dbReference type="NCBI Taxonomy" id="340099"/>
    <lineage>
        <taxon>Bacteria</taxon>
        <taxon>Bacillati</taxon>
        <taxon>Bacillota</taxon>
        <taxon>Clostridia</taxon>
        <taxon>Thermoanaerobacterales</taxon>
        <taxon>Thermoanaerobacteraceae</taxon>
        <taxon>Thermoanaerobacter</taxon>
    </lineage>
</organism>
<name>PYRDB_THEP3</name>
<sequence length="302" mass="32119">MNLQVEVGGLKLKNPVMTASGTFGFGREYGEYIDLNQLGAIVVKGLTVNPKEGNPPPRVYETPCGMLNSVGLQNPGINAFIEKELPFLRDYDVAVIVNIAGETIEEFAYMAKKLDIDGVDGIEINVSCPNVKKGGMAFGINPEDIFNITKEVKKVTQKTVIVKLTPNVGDIGVCAKAAEDGGADAVSLINTIAGMAINIDTRTPVFKNVIAGLSGPAIKPIALRMVYEAARAVKIPVIGMGGISSFKDALEFMIAGAKAVAIGTCNFVNPNCTIEVIEGIKQYMVLNNIEDINEIIGSLKVD</sequence>
<gene>
    <name type="primary">pyrD</name>
    <name type="ordered locus">Teth39_1341</name>
</gene>
<feature type="chain" id="PRO_1000100235" description="Dihydroorotate dehydrogenase B (NAD(+)), catalytic subunit">
    <location>
        <begin position="1"/>
        <end position="302"/>
    </location>
</feature>
<feature type="active site" description="Nucleophile">
    <location>
        <position position="128"/>
    </location>
</feature>
<feature type="binding site" evidence="1">
    <location>
        <position position="20"/>
    </location>
    <ligand>
        <name>FMN</name>
        <dbReference type="ChEBI" id="CHEBI:58210"/>
    </ligand>
</feature>
<feature type="binding site" evidence="1">
    <location>
        <begin position="44"/>
        <end position="45"/>
    </location>
    <ligand>
        <name>FMN</name>
        <dbReference type="ChEBI" id="CHEBI:58210"/>
    </ligand>
</feature>
<feature type="binding site" evidence="1">
    <location>
        <position position="44"/>
    </location>
    <ligand>
        <name>substrate</name>
    </ligand>
</feature>
<feature type="binding site" evidence="1">
    <location>
        <begin position="68"/>
        <end position="72"/>
    </location>
    <ligand>
        <name>substrate</name>
    </ligand>
</feature>
<feature type="binding site" evidence="1">
    <location>
        <position position="98"/>
    </location>
    <ligand>
        <name>FMN</name>
        <dbReference type="ChEBI" id="CHEBI:58210"/>
    </ligand>
</feature>
<feature type="binding site" evidence="1">
    <location>
        <position position="125"/>
    </location>
    <ligand>
        <name>FMN</name>
        <dbReference type="ChEBI" id="CHEBI:58210"/>
    </ligand>
</feature>
<feature type="binding site" evidence="1">
    <location>
        <position position="125"/>
    </location>
    <ligand>
        <name>substrate</name>
    </ligand>
</feature>
<feature type="binding site" evidence="1">
    <location>
        <position position="163"/>
    </location>
    <ligand>
        <name>FMN</name>
        <dbReference type="ChEBI" id="CHEBI:58210"/>
    </ligand>
</feature>
<feature type="binding site" evidence="1">
    <location>
        <position position="189"/>
    </location>
    <ligand>
        <name>FMN</name>
        <dbReference type="ChEBI" id="CHEBI:58210"/>
    </ligand>
</feature>
<feature type="binding site" evidence="1">
    <location>
        <begin position="190"/>
        <end position="191"/>
    </location>
    <ligand>
        <name>substrate</name>
    </ligand>
</feature>
<feature type="binding site" evidence="1">
    <location>
        <position position="215"/>
    </location>
    <ligand>
        <name>FMN</name>
        <dbReference type="ChEBI" id="CHEBI:58210"/>
    </ligand>
</feature>
<feature type="binding site" evidence="1">
    <location>
        <begin position="241"/>
        <end position="242"/>
    </location>
    <ligand>
        <name>FMN</name>
        <dbReference type="ChEBI" id="CHEBI:58210"/>
    </ligand>
</feature>
<feature type="binding site" evidence="1">
    <location>
        <begin position="263"/>
        <end position="264"/>
    </location>
    <ligand>
        <name>FMN</name>
        <dbReference type="ChEBI" id="CHEBI:58210"/>
    </ligand>
</feature>
<keyword id="KW-0963">Cytoplasm</keyword>
<keyword id="KW-0285">Flavoprotein</keyword>
<keyword id="KW-0288">FMN</keyword>
<keyword id="KW-0520">NAD</keyword>
<keyword id="KW-0560">Oxidoreductase</keyword>
<keyword id="KW-0665">Pyrimidine biosynthesis</keyword>
<keyword id="KW-1185">Reference proteome</keyword>
<dbReference type="EC" id="1.3.1.14"/>
<dbReference type="EMBL" id="CP000924">
    <property type="protein sequence ID" value="ABY94995.1"/>
    <property type="molecule type" value="Genomic_DNA"/>
</dbReference>
<dbReference type="RefSeq" id="WP_012269397.1">
    <property type="nucleotide sequence ID" value="NC_010321.1"/>
</dbReference>
<dbReference type="SMR" id="B0KA32"/>
<dbReference type="STRING" id="340099.Teth39_1341"/>
<dbReference type="KEGG" id="tpd:Teth39_1341"/>
<dbReference type="eggNOG" id="COG0167">
    <property type="taxonomic scope" value="Bacteria"/>
</dbReference>
<dbReference type="HOGENOM" id="CLU_042042_0_0_9"/>
<dbReference type="UniPathway" id="UPA00070">
    <property type="reaction ID" value="UER00945"/>
</dbReference>
<dbReference type="Proteomes" id="UP000002156">
    <property type="component" value="Chromosome"/>
</dbReference>
<dbReference type="GO" id="GO:0005737">
    <property type="term" value="C:cytoplasm"/>
    <property type="evidence" value="ECO:0007669"/>
    <property type="project" value="UniProtKB-SubCell"/>
</dbReference>
<dbReference type="GO" id="GO:0004589">
    <property type="term" value="F:dihydroorotate dehydrogenase (NAD+) activity"/>
    <property type="evidence" value="ECO:0007669"/>
    <property type="project" value="UniProtKB-EC"/>
</dbReference>
<dbReference type="GO" id="GO:0006207">
    <property type="term" value="P:'de novo' pyrimidine nucleobase biosynthetic process"/>
    <property type="evidence" value="ECO:0007669"/>
    <property type="project" value="InterPro"/>
</dbReference>
<dbReference type="GO" id="GO:0044205">
    <property type="term" value="P:'de novo' UMP biosynthetic process"/>
    <property type="evidence" value="ECO:0007669"/>
    <property type="project" value="UniProtKB-UniRule"/>
</dbReference>
<dbReference type="CDD" id="cd04740">
    <property type="entry name" value="DHOD_1B_like"/>
    <property type="match status" value="1"/>
</dbReference>
<dbReference type="FunFam" id="3.20.20.70:FF:000027">
    <property type="entry name" value="Dihydropyrimidine dehydrogenase [NADP(+)]"/>
    <property type="match status" value="1"/>
</dbReference>
<dbReference type="Gene3D" id="3.20.20.70">
    <property type="entry name" value="Aldolase class I"/>
    <property type="match status" value="1"/>
</dbReference>
<dbReference type="HAMAP" id="MF_00224">
    <property type="entry name" value="DHO_dh_type1"/>
    <property type="match status" value="1"/>
</dbReference>
<dbReference type="InterPro" id="IPR013785">
    <property type="entry name" value="Aldolase_TIM"/>
</dbReference>
<dbReference type="InterPro" id="IPR050074">
    <property type="entry name" value="DHO_dehydrogenase"/>
</dbReference>
<dbReference type="InterPro" id="IPR033888">
    <property type="entry name" value="DHOD_1B"/>
</dbReference>
<dbReference type="InterPro" id="IPR024920">
    <property type="entry name" value="Dihydroorotate_DH_1"/>
</dbReference>
<dbReference type="InterPro" id="IPR012135">
    <property type="entry name" value="Dihydroorotate_DH_1_2"/>
</dbReference>
<dbReference type="InterPro" id="IPR005720">
    <property type="entry name" value="Dihydroorotate_DH_cat"/>
</dbReference>
<dbReference type="InterPro" id="IPR001295">
    <property type="entry name" value="Dihydroorotate_DH_CS"/>
</dbReference>
<dbReference type="InterPro" id="IPR049622">
    <property type="entry name" value="Dihydroorotate_DH_I"/>
</dbReference>
<dbReference type="NCBIfam" id="NF005574">
    <property type="entry name" value="PRK07259.1"/>
    <property type="match status" value="1"/>
</dbReference>
<dbReference type="NCBIfam" id="TIGR01037">
    <property type="entry name" value="pyrD_sub1_fam"/>
    <property type="match status" value="1"/>
</dbReference>
<dbReference type="PANTHER" id="PTHR48109:SF1">
    <property type="entry name" value="DIHYDROOROTATE DEHYDROGENASE (FUMARATE)"/>
    <property type="match status" value="1"/>
</dbReference>
<dbReference type="PANTHER" id="PTHR48109">
    <property type="entry name" value="DIHYDROOROTATE DEHYDROGENASE (QUINONE), MITOCHONDRIAL-RELATED"/>
    <property type="match status" value="1"/>
</dbReference>
<dbReference type="Pfam" id="PF01180">
    <property type="entry name" value="DHO_dh"/>
    <property type="match status" value="1"/>
</dbReference>
<dbReference type="PIRSF" id="PIRSF000164">
    <property type="entry name" value="DHO_oxidase"/>
    <property type="match status" value="1"/>
</dbReference>
<dbReference type="SUPFAM" id="SSF51395">
    <property type="entry name" value="FMN-linked oxidoreductases"/>
    <property type="match status" value="1"/>
</dbReference>
<dbReference type="PROSITE" id="PS00911">
    <property type="entry name" value="DHODEHASE_1"/>
    <property type="match status" value="1"/>
</dbReference>
<dbReference type="PROSITE" id="PS00912">
    <property type="entry name" value="DHODEHASE_2"/>
    <property type="match status" value="1"/>
</dbReference>
<comment type="function">
    <text evidence="1">Catalyzes the conversion of dihydroorotate to orotate with NAD(+) as electron acceptor.</text>
</comment>
<comment type="catalytic activity">
    <reaction>
        <text>(S)-dihydroorotate + NAD(+) = orotate + NADH + H(+)</text>
        <dbReference type="Rhea" id="RHEA:13513"/>
        <dbReference type="ChEBI" id="CHEBI:15378"/>
        <dbReference type="ChEBI" id="CHEBI:30839"/>
        <dbReference type="ChEBI" id="CHEBI:30864"/>
        <dbReference type="ChEBI" id="CHEBI:57540"/>
        <dbReference type="ChEBI" id="CHEBI:57945"/>
        <dbReference type="EC" id="1.3.1.14"/>
    </reaction>
</comment>
<comment type="cofactor">
    <cofactor evidence="1">
        <name>FMN</name>
        <dbReference type="ChEBI" id="CHEBI:58210"/>
    </cofactor>
    <text evidence="1">Binds 1 FMN per subunit.</text>
</comment>
<comment type="pathway">
    <text>Pyrimidine metabolism; UMP biosynthesis via de novo pathway; orotate from (S)-dihydroorotate (NAD(+) route): step 1/1.</text>
</comment>
<comment type="subunit">
    <text evidence="1">Heterotetramer of 2 PyrK and 2 PyrD type B subunits.</text>
</comment>
<comment type="subcellular location">
    <subcellularLocation>
        <location evidence="1">Cytoplasm</location>
    </subcellularLocation>
</comment>
<comment type="similarity">
    <text evidence="2">Belongs to the dihydroorotate dehydrogenase family. Type 1 subfamily.</text>
</comment>
<accession>B0KA32</accession>
<reference key="1">
    <citation type="submission" date="2008-01" db="EMBL/GenBank/DDBJ databases">
        <title>Complete sequence of Thermoanaerobacter pseudethanolicus 39E.</title>
        <authorList>
            <person name="Copeland A."/>
            <person name="Lucas S."/>
            <person name="Lapidus A."/>
            <person name="Barry K."/>
            <person name="Glavina del Rio T."/>
            <person name="Dalin E."/>
            <person name="Tice H."/>
            <person name="Pitluck S."/>
            <person name="Bruce D."/>
            <person name="Goodwin L."/>
            <person name="Saunders E."/>
            <person name="Brettin T."/>
            <person name="Detter J.C."/>
            <person name="Han C."/>
            <person name="Schmutz J."/>
            <person name="Larimer F."/>
            <person name="Land M."/>
            <person name="Hauser L."/>
            <person name="Kyrpides N."/>
            <person name="Lykidis A."/>
            <person name="Hemme C."/>
            <person name="Fields M.W."/>
            <person name="He Z."/>
            <person name="Zhou J."/>
            <person name="Richardson P."/>
        </authorList>
    </citation>
    <scope>NUCLEOTIDE SEQUENCE [LARGE SCALE GENOMIC DNA]</scope>
    <source>
        <strain>ATCC 33223 / DSM 2355 / 39E</strain>
    </source>
</reference>
<protein>
    <recommendedName>
        <fullName>Dihydroorotate dehydrogenase B (NAD(+)), catalytic subunit</fullName>
        <shortName>DHOD B</shortName>
        <shortName>DHODase B</shortName>
        <shortName>DHOdehase B</shortName>
        <ecNumber>1.3.1.14</ecNumber>
    </recommendedName>
    <alternativeName>
        <fullName>Dihydroorotate oxidase B</fullName>
    </alternativeName>
    <alternativeName>
        <fullName>Orotate reductase (NADH)</fullName>
    </alternativeName>
</protein>
<proteinExistence type="inferred from homology"/>
<evidence type="ECO:0000250" key="1"/>
<evidence type="ECO:0000305" key="2"/>